<name>ATPA_STRT1</name>
<sequence>MAINAQEISALIKKQIENFQPNFDVTETGVVTYIGDGIARARGLDNAMSGELLEFSNGVFGMAQNLESNDVGIIILGDFYTIREGDEVKRTGKIMEVPVGEALIGRVVNPLGQPIDGLGDIKTTATRPVEAPAPGVMQRKSVSEPLQTGLKAVDALVPIGRGQRELIIGDRQTGKTSVAIDAILNQKGQDVICIYVAIGQKESTVRTQVESLRKHGALDYTIVVTASASQPSPLLYIAPYAGVAMAEEFMYNGKHVLIVYDDLSKQAVAYRELSLLLRRPPGREAYPGDVFYLHSRLLERSAKLSDDLGGGSITALPIIQTQAGDISAYIATNVISITDGQIFLQENLFNSGIRPAIDAGSSVSRVGGSAQIKAMKKVAGTLRLDLASYRELEAFTQFGSDLDAATQAKLNRGRRTVEVLKQPLHKPLPVEKQVLILYALTHGFLDSVPVDQILDFEEALYDYFDSHHEDIFETIRSTKDLPEEAVLNEAIQAFKDQSEYK</sequence>
<reference key="1">
    <citation type="journal article" date="2004" name="Nat. Biotechnol.">
        <title>Complete sequence and comparative genome analysis of the dairy bacterium Streptococcus thermophilus.</title>
        <authorList>
            <person name="Bolotin A."/>
            <person name="Quinquis B."/>
            <person name="Renault P."/>
            <person name="Sorokin A."/>
            <person name="Ehrlich S.D."/>
            <person name="Kulakauskas S."/>
            <person name="Lapidus A."/>
            <person name="Goltsman E."/>
            <person name="Mazur M."/>
            <person name="Pusch G.D."/>
            <person name="Fonstein M."/>
            <person name="Overbeek R."/>
            <person name="Kyprides N."/>
            <person name="Purnelle B."/>
            <person name="Prozzi D."/>
            <person name="Ngui K."/>
            <person name="Masuy D."/>
            <person name="Hancy F."/>
            <person name="Burteau S."/>
            <person name="Boutry M."/>
            <person name="Delcour J."/>
            <person name="Goffeau A."/>
            <person name="Hols P."/>
        </authorList>
    </citation>
    <scope>NUCLEOTIDE SEQUENCE [LARGE SCALE GENOMIC DNA]</scope>
    <source>
        <strain>CNRZ 1066</strain>
    </source>
</reference>
<dbReference type="EC" id="7.1.2.2" evidence="1"/>
<dbReference type="EMBL" id="CP000024">
    <property type="protein sequence ID" value="AAV62081.1"/>
    <property type="molecule type" value="Genomic_DNA"/>
</dbReference>
<dbReference type="RefSeq" id="WP_011225596.1">
    <property type="nucleotide sequence ID" value="NC_006449.1"/>
</dbReference>
<dbReference type="SMR" id="Q5M106"/>
<dbReference type="GeneID" id="66898392"/>
<dbReference type="KEGG" id="stc:str0482"/>
<dbReference type="HOGENOM" id="CLU_010091_2_1_9"/>
<dbReference type="GO" id="GO:0005886">
    <property type="term" value="C:plasma membrane"/>
    <property type="evidence" value="ECO:0007669"/>
    <property type="project" value="UniProtKB-SubCell"/>
</dbReference>
<dbReference type="GO" id="GO:0045259">
    <property type="term" value="C:proton-transporting ATP synthase complex"/>
    <property type="evidence" value="ECO:0007669"/>
    <property type="project" value="UniProtKB-KW"/>
</dbReference>
<dbReference type="GO" id="GO:0043531">
    <property type="term" value="F:ADP binding"/>
    <property type="evidence" value="ECO:0007669"/>
    <property type="project" value="TreeGrafter"/>
</dbReference>
<dbReference type="GO" id="GO:0005524">
    <property type="term" value="F:ATP binding"/>
    <property type="evidence" value="ECO:0007669"/>
    <property type="project" value="UniProtKB-UniRule"/>
</dbReference>
<dbReference type="GO" id="GO:0046933">
    <property type="term" value="F:proton-transporting ATP synthase activity, rotational mechanism"/>
    <property type="evidence" value="ECO:0007669"/>
    <property type="project" value="UniProtKB-UniRule"/>
</dbReference>
<dbReference type="CDD" id="cd18113">
    <property type="entry name" value="ATP-synt_F1_alpha_C"/>
    <property type="match status" value="1"/>
</dbReference>
<dbReference type="CDD" id="cd18116">
    <property type="entry name" value="ATP-synt_F1_alpha_N"/>
    <property type="match status" value="1"/>
</dbReference>
<dbReference type="CDD" id="cd01132">
    <property type="entry name" value="F1-ATPase_alpha_CD"/>
    <property type="match status" value="1"/>
</dbReference>
<dbReference type="FunFam" id="1.20.150.20:FF:000001">
    <property type="entry name" value="ATP synthase subunit alpha"/>
    <property type="match status" value="1"/>
</dbReference>
<dbReference type="FunFam" id="2.40.30.20:FF:000001">
    <property type="entry name" value="ATP synthase subunit alpha"/>
    <property type="match status" value="1"/>
</dbReference>
<dbReference type="FunFam" id="3.40.50.300:FF:000002">
    <property type="entry name" value="ATP synthase subunit alpha"/>
    <property type="match status" value="1"/>
</dbReference>
<dbReference type="Gene3D" id="2.40.30.20">
    <property type="match status" value="1"/>
</dbReference>
<dbReference type="Gene3D" id="1.20.150.20">
    <property type="entry name" value="ATP synthase alpha/beta chain, C-terminal domain"/>
    <property type="match status" value="1"/>
</dbReference>
<dbReference type="Gene3D" id="3.40.50.300">
    <property type="entry name" value="P-loop containing nucleotide triphosphate hydrolases"/>
    <property type="match status" value="1"/>
</dbReference>
<dbReference type="HAMAP" id="MF_01346">
    <property type="entry name" value="ATP_synth_alpha_bact"/>
    <property type="match status" value="1"/>
</dbReference>
<dbReference type="InterPro" id="IPR023366">
    <property type="entry name" value="ATP_synth_asu-like_sf"/>
</dbReference>
<dbReference type="InterPro" id="IPR000793">
    <property type="entry name" value="ATP_synth_asu_C"/>
</dbReference>
<dbReference type="InterPro" id="IPR038376">
    <property type="entry name" value="ATP_synth_asu_C_sf"/>
</dbReference>
<dbReference type="InterPro" id="IPR033732">
    <property type="entry name" value="ATP_synth_F1_a_nt-bd_dom"/>
</dbReference>
<dbReference type="InterPro" id="IPR005294">
    <property type="entry name" value="ATP_synth_F1_asu"/>
</dbReference>
<dbReference type="InterPro" id="IPR004100">
    <property type="entry name" value="ATPase_F1/V1/A1_a/bsu_N"/>
</dbReference>
<dbReference type="InterPro" id="IPR036121">
    <property type="entry name" value="ATPase_F1/V1/A1_a/bsu_N_sf"/>
</dbReference>
<dbReference type="InterPro" id="IPR000194">
    <property type="entry name" value="ATPase_F1/V1/A1_a/bsu_nucl-bd"/>
</dbReference>
<dbReference type="InterPro" id="IPR027417">
    <property type="entry name" value="P-loop_NTPase"/>
</dbReference>
<dbReference type="NCBIfam" id="TIGR00962">
    <property type="entry name" value="atpA"/>
    <property type="match status" value="1"/>
</dbReference>
<dbReference type="NCBIfam" id="NF009884">
    <property type="entry name" value="PRK13343.1"/>
    <property type="match status" value="1"/>
</dbReference>
<dbReference type="PANTHER" id="PTHR48082">
    <property type="entry name" value="ATP SYNTHASE SUBUNIT ALPHA, MITOCHONDRIAL"/>
    <property type="match status" value="1"/>
</dbReference>
<dbReference type="PANTHER" id="PTHR48082:SF2">
    <property type="entry name" value="ATP SYNTHASE SUBUNIT ALPHA, MITOCHONDRIAL"/>
    <property type="match status" value="1"/>
</dbReference>
<dbReference type="Pfam" id="PF00006">
    <property type="entry name" value="ATP-synt_ab"/>
    <property type="match status" value="1"/>
</dbReference>
<dbReference type="Pfam" id="PF00306">
    <property type="entry name" value="ATP-synt_ab_C"/>
    <property type="match status" value="1"/>
</dbReference>
<dbReference type="Pfam" id="PF02874">
    <property type="entry name" value="ATP-synt_ab_N"/>
    <property type="match status" value="1"/>
</dbReference>
<dbReference type="PIRSF" id="PIRSF039088">
    <property type="entry name" value="F_ATPase_subunit_alpha"/>
    <property type="match status" value="1"/>
</dbReference>
<dbReference type="SUPFAM" id="SSF47917">
    <property type="entry name" value="C-terminal domain of alpha and beta subunits of F1 ATP synthase"/>
    <property type="match status" value="1"/>
</dbReference>
<dbReference type="SUPFAM" id="SSF50615">
    <property type="entry name" value="N-terminal domain of alpha and beta subunits of F1 ATP synthase"/>
    <property type="match status" value="1"/>
</dbReference>
<dbReference type="SUPFAM" id="SSF52540">
    <property type="entry name" value="P-loop containing nucleoside triphosphate hydrolases"/>
    <property type="match status" value="1"/>
</dbReference>
<gene>
    <name evidence="1" type="primary">atpA</name>
    <name type="ordered locus">str0482</name>
</gene>
<keyword id="KW-0066">ATP synthesis</keyword>
<keyword id="KW-0067">ATP-binding</keyword>
<keyword id="KW-1003">Cell membrane</keyword>
<keyword id="KW-0139">CF(1)</keyword>
<keyword id="KW-0375">Hydrogen ion transport</keyword>
<keyword id="KW-0406">Ion transport</keyword>
<keyword id="KW-0472">Membrane</keyword>
<keyword id="KW-0547">Nucleotide-binding</keyword>
<keyword id="KW-1278">Translocase</keyword>
<keyword id="KW-0813">Transport</keyword>
<proteinExistence type="inferred from homology"/>
<accession>Q5M106</accession>
<protein>
    <recommendedName>
        <fullName evidence="1">ATP synthase subunit alpha</fullName>
        <ecNumber evidence="1">7.1.2.2</ecNumber>
    </recommendedName>
    <alternativeName>
        <fullName evidence="1">ATP synthase F1 sector subunit alpha</fullName>
    </alternativeName>
    <alternativeName>
        <fullName evidence="1">F-ATPase subunit alpha</fullName>
    </alternativeName>
</protein>
<feature type="chain" id="PRO_0000238372" description="ATP synthase subunit alpha">
    <location>
        <begin position="1"/>
        <end position="501"/>
    </location>
</feature>
<feature type="binding site" evidence="1">
    <location>
        <begin position="169"/>
        <end position="176"/>
    </location>
    <ligand>
        <name>ATP</name>
        <dbReference type="ChEBI" id="CHEBI:30616"/>
    </ligand>
</feature>
<feature type="site" description="Required for activity" evidence="1">
    <location>
        <position position="362"/>
    </location>
</feature>
<comment type="function">
    <text evidence="1">Produces ATP from ADP in the presence of a proton gradient across the membrane. The alpha chain is a regulatory subunit.</text>
</comment>
<comment type="catalytic activity">
    <reaction evidence="1">
        <text>ATP + H2O + 4 H(+)(in) = ADP + phosphate + 5 H(+)(out)</text>
        <dbReference type="Rhea" id="RHEA:57720"/>
        <dbReference type="ChEBI" id="CHEBI:15377"/>
        <dbReference type="ChEBI" id="CHEBI:15378"/>
        <dbReference type="ChEBI" id="CHEBI:30616"/>
        <dbReference type="ChEBI" id="CHEBI:43474"/>
        <dbReference type="ChEBI" id="CHEBI:456216"/>
        <dbReference type="EC" id="7.1.2.2"/>
    </reaction>
</comment>
<comment type="subunit">
    <text evidence="1">F-type ATPases have 2 components, CF(1) - the catalytic core - and CF(0) - the membrane proton channel. CF(1) has five subunits: alpha(3), beta(3), gamma(1), delta(1), epsilon(1). CF(0) has three main subunits: a(1), b(2) and c(9-12). The alpha and beta chains form an alternating ring which encloses part of the gamma chain. CF(1) is attached to CF(0) by a central stalk formed by the gamma and epsilon chains, while a peripheral stalk is formed by the delta and b chains.</text>
</comment>
<comment type="subcellular location">
    <subcellularLocation>
        <location evidence="1">Cell membrane</location>
        <topology evidence="1">Peripheral membrane protein</topology>
    </subcellularLocation>
</comment>
<comment type="similarity">
    <text evidence="1">Belongs to the ATPase alpha/beta chains family.</text>
</comment>
<evidence type="ECO:0000255" key="1">
    <source>
        <dbReference type="HAMAP-Rule" id="MF_01346"/>
    </source>
</evidence>
<organism>
    <name type="scientific">Streptococcus thermophilus (strain CNRZ 1066)</name>
    <dbReference type="NCBI Taxonomy" id="299768"/>
    <lineage>
        <taxon>Bacteria</taxon>
        <taxon>Bacillati</taxon>
        <taxon>Bacillota</taxon>
        <taxon>Bacilli</taxon>
        <taxon>Lactobacillales</taxon>
        <taxon>Streptococcaceae</taxon>
        <taxon>Streptococcus</taxon>
    </lineage>
</organism>